<proteinExistence type="evidence at protein level"/>
<accession>Q7M753</accession>
<accession>Q3U4S0</accession>
<keyword id="KW-0067">ATP-binding</keyword>
<keyword id="KW-0173">Coenzyme A biosynthesis</keyword>
<keyword id="KW-0963">Cytoplasm</keyword>
<keyword id="KW-0225">Disease variant</keyword>
<keyword id="KW-0418">Kinase</keyword>
<keyword id="KW-0547">Nucleotide-binding</keyword>
<keyword id="KW-0597">Phosphoprotein</keyword>
<keyword id="KW-1185">Reference proteome</keyword>
<keyword id="KW-0808">Transferase</keyword>
<keyword id="KW-0809">Transit peptide</keyword>
<feature type="chain" id="PRO_0000452677" description="Pantothenate kinase 2, mitochondrial">
    <location>
        <begin position="1"/>
        <end position="456"/>
    </location>
</feature>
<feature type="region of interest" description="Disordered" evidence="4">
    <location>
        <begin position="16"/>
        <end position="89"/>
    </location>
</feature>
<feature type="short sequence motif" description="Nuclear export signal" evidence="2">
    <location>
        <begin position="154"/>
        <end position="161"/>
    </location>
</feature>
<feature type="compositionally biased region" description="Low complexity" evidence="4">
    <location>
        <begin position="28"/>
        <end position="39"/>
    </location>
</feature>
<feature type="compositionally biased region" description="Low complexity" evidence="4">
    <location>
        <begin position="55"/>
        <end position="65"/>
    </location>
</feature>
<feature type="active site" description="Proton acceptor" evidence="3">
    <location>
        <position position="224"/>
    </location>
</feature>
<feature type="binding site" evidence="1">
    <location>
        <position position="278"/>
    </location>
    <ligand>
        <name>acetyl-CoA</name>
        <dbReference type="ChEBI" id="CHEBI:57288"/>
    </ligand>
</feature>
<feature type="binding site" evidence="1">
    <location>
        <position position="281"/>
    </location>
    <ligand>
        <name>acetyl-CoA</name>
        <dbReference type="ChEBI" id="CHEBI:57288"/>
    </ligand>
</feature>
<feature type="binding site" evidence="1">
    <location>
        <position position="293"/>
    </location>
    <ligand>
        <name>acetyl-CoA</name>
        <dbReference type="ChEBI" id="CHEBI:57288"/>
    </ligand>
</feature>
<feature type="modified residue" description="Phosphoserine" evidence="2">
    <location>
        <position position="55"/>
    </location>
</feature>
<feature type="modified residue" description="Phosphoserine" evidence="2">
    <location>
        <position position="56"/>
    </location>
</feature>
<feature type="modified residue" description="Phosphoserine" evidence="2">
    <location>
        <position position="75"/>
    </location>
</feature>
<dbReference type="EC" id="2.7.1.33" evidence="5 6 7"/>
<dbReference type="EMBL" id="BK000014">
    <property type="protein sequence ID" value="DAA00008.1"/>
    <property type="molecule type" value="mRNA"/>
</dbReference>
<dbReference type="EMBL" id="AL808128">
    <property type="status" value="NOT_ANNOTATED_CDS"/>
    <property type="molecule type" value="Genomic_DNA"/>
</dbReference>
<dbReference type="EMBL" id="AK154080">
    <property type="protein sequence ID" value="BAE32361.1"/>
    <property type="status" value="ALT_INIT"/>
    <property type="molecule type" value="mRNA"/>
</dbReference>
<dbReference type="EMBL" id="BC106184">
    <property type="protein sequence ID" value="AAI06185.1"/>
    <property type="status" value="ALT_INIT"/>
    <property type="molecule type" value="mRNA"/>
</dbReference>
<dbReference type="CCDS" id="CCDS16761.1"/>
<dbReference type="RefSeq" id="NP_705721.3">
    <property type="nucleotide sequence ID" value="NM_153501.3"/>
</dbReference>
<dbReference type="SMR" id="Q7M753"/>
<dbReference type="FunCoup" id="Q7M753">
    <property type="interactions" value="5049"/>
</dbReference>
<dbReference type="STRING" id="10090.ENSMUSP00000119606"/>
<dbReference type="iPTMnet" id="Q7M753"/>
<dbReference type="PhosphoSitePlus" id="Q7M753"/>
<dbReference type="SwissPalm" id="Q7M753"/>
<dbReference type="PaxDb" id="10090-ENSMUSP00000119606"/>
<dbReference type="ProteomicsDB" id="328865"/>
<dbReference type="Antibodypedia" id="2051">
    <property type="antibodies" value="365 antibodies from 32 providers"/>
</dbReference>
<dbReference type="DNASU" id="74450"/>
<dbReference type="Ensembl" id="ENSMUST00000150843.9">
    <property type="protein sequence ID" value="ENSMUSP00000119606.3"/>
    <property type="gene ID" value="ENSMUSG00000037514.19"/>
</dbReference>
<dbReference type="GeneID" id="74450"/>
<dbReference type="KEGG" id="mmu:74450"/>
<dbReference type="UCSC" id="uc008mlg.2">
    <property type="organism name" value="mouse"/>
</dbReference>
<dbReference type="AGR" id="MGI:1921700"/>
<dbReference type="CTD" id="80025"/>
<dbReference type="MGI" id="MGI:1921700">
    <property type="gene designation" value="Pank2"/>
</dbReference>
<dbReference type="VEuPathDB" id="HostDB:ENSMUSG00000037514"/>
<dbReference type="eggNOG" id="KOG2201">
    <property type="taxonomic scope" value="Eukaryota"/>
</dbReference>
<dbReference type="GeneTree" id="ENSGT00940000157626"/>
<dbReference type="HOGENOM" id="CLU_011154_0_1_1"/>
<dbReference type="InParanoid" id="Q7M753"/>
<dbReference type="OMA" id="WSKGAKQ"/>
<dbReference type="OrthoDB" id="275583at2759"/>
<dbReference type="PhylomeDB" id="Q7M753"/>
<dbReference type="TreeFam" id="TF314866"/>
<dbReference type="Reactome" id="R-MMU-196783">
    <property type="pathway name" value="Coenzyme A biosynthesis"/>
</dbReference>
<dbReference type="UniPathway" id="UPA00241">
    <property type="reaction ID" value="UER00352"/>
</dbReference>
<dbReference type="BioGRID-ORCS" id="74450">
    <property type="hits" value="1 hit in 80 CRISPR screens"/>
</dbReference>
<dbReference type="ChiTaRS" id="Pank2">
    <property type="organism name" value="mouse"/>
</dbReference>
<dbReference type="PRO" id="PR:Q7M753"/>
<dbReference type="Proteomes" id="UP000000589">
    <property type="component" value="Chromosome 2"/>
</dbReference>
<dbReference type="Bgee" id="ENSMUSG00000037514">
    <property type="expression patterns" value="Expressed in spermatid and 230 other cell types or tissues"/>
</dbReference>
<dbReference type="ExpressionAtlas" id="Q7M753">
    <property type="expression patterns" value="baseline and differential"/>
</dbReference>
<dbReference type="GO" id="GO:0005829">
    <property type="term" value="C:cytosol"/>
    <property type="evidence" value="ECO:0000314"/>
    <property type="project" value="MGI"/>
</dbReference>
<dbReference type="GO" id="GO:0005758">
    <property type="term" value="C:mitochondrial intermembrane space"/>
    <property type="evidence" value="ECO:0000314"/>
    <property type="project" value="MGI"/>
</dbReference>
<dbReference type="GO" id="GO:0005739">
    <property type="term" value="C:mitochondrion"/>
    <property type="evidence" value="ECO:0000315"/>
    <property type="project" value="MGI"/>
</dbReference>
<dbReference type="GO" id="GO:0005634">
    <property type="term" value="C:nucleus"/>
    <property type="evidence" value="ECO:0007669"/>
    <property type="project" value="Ensembl"/>
</dbReference>
<dbReference type="GO" id="GO:0005524">
    <property type="term" value="F:ATP binding"/>
    <property type="evidence" value="ECO:0007669"/>
    <property type="project" value="UniProtKB-KW"/>
</dbReference>
<dbReference type="GO" id="GO:0004594">
    <property type="term" value="F:pantothenate kinase activity"/>
    <property type="evidence" value="ECO:0000314"/>
    <property type="project" value="MGI"/>
</dbReference>
<dbReference type="GO" id="GO:0009060">
    <property type="term" value="P:aerobic respiration"/>
    <property type="evidence" value="ECO:0000315"/>
    <property type="project" value="MGI"/>
</dbReference>
<dbReference type="GO" id="GO:0001525">
    <property type="term" value="P:angiogenesis"/>
    <property type="evidence" value="ECO:0007669"/>
    <property type="project" value="Ensembl"/>
</dbReference>
<dbReference type="GO" id="GO:0015937">
    <property type="term" value="P:coenzyme A biosynthetic process"/>
    <property type="evidence" value="ECO:0000315"/>
    <property type="project" value="MGI"/>
</dbReference>
<dbReference type="GO" id="GO:0007005">
    <property type="term" value="P:mitochondrion organization"/>
    <property type="evidence" value="ECO:0000315"/>
    <property type="project" value="MGI"/>
</dbReference>
<dbReference type="GO" id="GO:1904251">
    <property type="term" value="P:regulation of bile acid metabolic process"/>
    <property type="evidence" value="ECO:0007669"/>
    <property type="project" value="Ensembl"/>
</dbReference>
<dbReference type="GO" id="GO:0019217">
    <property type="term" value="P:regulation of fatty acid metabolic process"/>
    <property type="evidence" value="ECO:0007669"/>
    <property type="project" value="Ensembl"/>
</dbReference>
<dbReference type="GO" id="GO:0051881">
    <property type="term" value="P:regulation of mitochondrial membrane potential"/>
    <property type="evidence" value="ECO:0000315"/>
    <property type="project" value="MGI"/>
</dbReference>
<dbReference type="GO" id="GO:0090207">
    <property type="term" value="P:regulation of triglyceride metabolic process"/>
    <property type="evidence" value="ECO:0007669"/>
    <property type="project" value="Ensembl"/>
</dbReference>
<dbReference type="GO" id="GO:0007286">
    <property type="term" value="P:spermatid development"/>
    <property type="evidence" value="ECO:0000315"/>
    <property type="project" value="MGI"/>
</dbReference>
<dbReference type="FunFam" id="3.30.420.40:FF:000244">
    <property type="entry name" value="pantothenate kinase 1-like isoform X3"/>
    <property type="match status" value="1"/>
</dbReference>
<dbReference type="FunFam" id="3.30.420.510:FF:000001">
    <property type="entry name" value="pantothenate kinase 2, mitochondrial"/>
    <property type="match status" value="1"/>
</dbReference>
<dbReference type="FunFam" id="3.30.420.40:FF:000392">
    <property type="entry name" value="pantothenate kinase 3-like isoform X1"/>
    <property type="match status" value="1"/>
</dbReference>
<dbReference type="Gene3D" id="3.30.420.40">
    <property type="match status" value="1"/>
</dbReference>
<dbReference type="Gene3D" id="3.30.420.510">
    <property type="match status" value="1"/>
</dbReference>
<dbReference type="InterPro" id="IPR043129">
    <property type="entry name" value="ATPase_NBD"/>
</dbReference>
<dbReference type="InterPro" id="IPR004567">
    <property type="entry name" value="Type_II_PanK"/>
</dbReference>
<dbReference type="NCBIfam" id="TIGR00555">
    <property type="entry name" value="panK_eukar"/>
    <property type="match status" value="1"/>
</dbReference>
<dbReference type="PANTHER" id="PTHR12280">
    <property type="entry name" value="PANTOTHENATE KINASE"/>
    <property type="match status" value="1"/>
</dbReference>
<dbReference type="PANTHER" id="PTHR12280:SF25">
    <property type="entry name" value="PANTOTHENATE KINASE 2, MITOCHONDRIAL"/>
    <property type="match status" value="1"/>
</dbReference>
<dbReference type="Pfam" id="PF03630">
    <property type="entry name" value="Fumble"/>
    <property type="match status" value="1"/>
</dbReference>
<dbReference type="SUPFAM" id="SSF53067">
    <property type="entry name" value="Actin-like ATPase domain"/>
    <property type="match status" value="2"/>
</dbReference>
<name>PANK2_MOUSE</name>
<evidence type="ECO:0000250" key="1">
    <source>
        <dbReference type="UniProtKB" id="Q8TE04"/>
    </source>
</evidence>
<evidence type="ECO:0000250" key="2">
    <source>
        <dbReference type="UniProtKB" id="Q9BZ23"/>
    </source>
</evidence>
<evidence type="ECO:0000250" key="3">
    <source>
        <dbReference type="UniProtKB" id="Q9H999"/>
    </source>
</evidence>
<evidence type="ECO:0000256" key="4">
    <source>
        <dbReference type="SAM" id="MobiDB-lite"/>
    </source>
</evidence>
<evidence type="ECO:0000269" key="5">
    <source>
    </source>
</evidence>
<evidence type="ECO:0000269" key="6">
    <source>
    </source>
</evidence>
<evidence type="ECO:0000269" key="7">
    <source>
    </source>
</evidence>
<evidence type="ECO:0000269" key="8">
    <source>
    </source>
</evidence>
<evidence type="ECO:0000305" key="9"/>
<organism>
    <name type="scientific">Mus musculus</name>
    <name type="common">Mouse</name>
    <dbReference type="NCBI Taxonomy" id="10090"/>
    <lineage>
        <taxon>Eukaryota</taxon>
        <taxon>Metazoa</taxon>
        <taxon>Chordata</taxon>
        <taxon>Craniata</taxon>
        <taxon>Vertebrata</taxon>
        <taxon>Euteleostomi</taxon>
        <taxon>Mammalia</taxon>
        <taxon>Eutheria</taxon>
        <taxon>Euarchontoglires</taxon>
        <taxon>Glires</taxon>
        <taxon>Rodentia</taxon>
        <taxon>Myomorpha</taxon>
        <taxon>Muroidea</taxon>
        <taxon>Muridae</taxon>
        <taxon>Murinae</taxon>
        <taxon>Mus</taxon>
        <taxon>Mus</taxon>
    </lineage>
</organism>
<comment type="function">
    <text evidence="5 6 7">Catalyzes the phosphorylation of pantothenate to generate 4'-phosphopantothenate in the first and rate-determining step of coenzyme A (CoA) synthesis.</text>
</comment>
<comment type="catalytic activity">
    <reaction evidence="5 6 7">
        <text>(R)-pantothenate + ATP = (R)-4'-phosphopantothenate + ADP + H(+)</text>
        <dbReference type="Rhea" id="RHEA:16373"/>
        <dbReference type="ChEBI" id="CHEBI:10986"/>
        <dbReference type="ChEBI" id="CHEBI:15378"/>
        <dbReference type="ChEBI" id="CHEBI:29032"/>
        <dbReference type="ChEBI" id="CHEBI:30616"/>
        <dbReference type="ChEBI" id="CHEBI:456216"/>
        <dbReference type="EC" id="2.7.1.33"/>
    </reaction>
</comment>
<comment type="activity regulation">
    <text evidence="5 6">Inhibited by acetyl-CoA (PubMed:17825826). Inhibited by calcium hopantenate (PubMed:17379144). Activated by palmitoylcarnitine (PubMed:17825826).</text>
</comment>
<comment type="pathway">
    <text evidence="5 6 7">Cofactor biosynthesis; coenzyme A biosynthesis; CoA from (R)-pantothenate: step 1/5.</text>
</comment>
<comment type="subunit">
    <text evidence="2">Homodimer.</text>
</comment>
<comment type="subcellular location">
    <subcellularLocation>
        <location evidence="6 8">Cytoplasm</location>
        <location evidence="6 8">Cytosol</location>
    </subcellularLocation>
</comment>
<comment type="disruption phenotype">
    <text evidence="7">Single knockout mice show a reduction in pantothenate kinase (PANK) activity of about 30% and 60% in the liver and brain respectively. Pank1 and Pank2 double knockout mice develop progressively severe hypoglycemia and hyperketonemia by postnatal day 10 leading to their death by day 17. A reduction in PANK activity of about 90-95% seen in the liver and brain and hepatocytes show reduced NADH levels.</text>
</comment>
<comment type="similarity">
    <text evidence="9">Belongs to the type II pantothenate kinase family.</text>
</comment>
<comment type="sequence caution" evidence="9">
    <conflict type="erroneous initiation">
        <sequence resource="EMBL-CDS" id="AAI06185"/>
    </conflict>
    <text>Extended N-terminus.</text>
</comment>
<comment type="sequence caution" evidence="9">
    <conflict type="erroneous initiation">
        <sequence resource="EMBL-CDS" id="BAE32361"/>
    </conflict>
    <text>Extended N-terminus.</text>
</comment>
<gene>
    <name type="primary">Pank2</name>
</gene>
<protein>
    <recommendedName>
        <fullName>Pantothenate kinase 2, mitochondrial</fullName>
        <shortName>hPanK2</shortName>
        <ecNumber evidence="5 6 7">2.7.1.33</ecNumber>
    </recommendedName>
    <alternativeName>
        <fullName>Pantothenic acid kinase 2</fullName>
    </alternativeName>
</protein>
<reference key="1">
    <citation type="submission" date="2003-02" db="EMBL/GenBank/DDBJ databases">
        <authorList>
            <person name="Zhou B."/>
            <person name="Westaway S.K."/>
            <person name="Levinson B."/>
            <person name="Johnson M.A."/>
            <person name="Gitschier J."/>
            <person name="Hayflick S.J."/>
        </authorList>
    </citation>
    <scope>NUCLEOTIDE SEQUENCE [MRNA]</scope>
</reference>
<reference key="2">
    <citation type="journal article" date="2009" name="PLoS Biol.">
        <title>Lineage-specific biology revealed by a finished genome assembly of the mouse.</title>
        <authorList>
            <person name="Church D.M."/>
            <person name="Goodstadt L."/>
            <person name="Hillier L.W."/>
            <person name="Zody M.C."/>
            <person name="Goldstein S."/>
            <person name="She X."/>
            <person name="Bult C.J."/>
            <person name="Agarwala R."/>
            <person name="Cherry J.L."/>
            <person name="DiCuccio M."/>
            <person name="Hlavina W."/>
            <person name="Kapustin Y."/>
            <person name="Meric P."/>
            <person name="Maglott D."/>
            <person name="Birtle Z."/>
            <person name="Marques A.C."/>
            <person name="Graves T."/>
            <person name="Zhou S."/>
            <person name="Teague B."/>
            <person name="Potamousis K."/>
            <person name="Churas C."/>
            <person name="Place M."/>
            <person name="Herschleb J."/>
            <person name="Runnheim R."/>
            <person name="Forrest D."/>
            <person name="Amos-Landgraf J."/>
            <person name="Schwartz D.C."/>
            <person name="Cheng Z."/>
            <person name="Lindblad-Toh K."/>
            <person name="Eichler E.E."/>
            <person name="Ponting C.P."/>
        </authorList>
    </citation>
    <scope>NUCLEOTIDE SEQUENCE [LARGE SCALE GENOMIC DNA]</scope>
    <source>
        <strain>C57BL/6J</strain>
    </source>
</reference>
<reference key="3">
    <citation type="journal article" date="2005" name="Science">
        <title>The transcriptional landscape of the mammalian genome.</title>
        <authorList>
            <person name="Carninci P."/>
            <person name="Kasukawa T."/>
            <person name="Katayama S."/>
            <person name="Gough J."/>
            <person name="Frith M.C."/>
            <person name="Maeda N."/>
            <person name="Oyama R."/>
            <person name="Ravasi T."/>
            <person name="Lenhard B."/>
            <person name="Wells C."/>
            <person name="Kodzius R."/>
            <person name="Shimokawa K."/>
            <person name="Bajic V.B."/>
            <person name="Brenner S.E."/>
            <person name="Batalov S."/>
            <person name="Forrest A.R."/>
            <person name="Zavolan M."/>
            <person name="Davis M.J."/>
            <person name="Wilming L.G."/>
            <person name="Aidinis V."/>
            <person name="Allen J.E."/>
            <person name="Ambesi-Impiombato A."/>
            <person name="Apweiler R."/>
            <person name="Aturaliya R.N."/>
            <person name="Bailey T.L."/>
            <person name="Bansal M."/>
            <person name="Baxter L."/>
            <person name="Beisel K.W."/>
            <person name="Bersano T."/>
            <person name="Bono H."/>
            <person name="Chalk A.M."/>
            <person name="Chiu K.P."/>
            <person name="Choudhary V."/>
            <person name="Christoffels A."/>
            <person name="Clutterbuck D.R."/>
            <person name="Crowe M.L."/>
            <person name="Dalla E."/>
            <person name="Dalrymple B.P."/>
            <person name="de Bono B."/>
            <person name="Della Gatta G."/>
            <person name="di Bernardo D."/>
            <person name="Down T."/>
            <person name="Engstrom P."/>
            <person name="Fagiolini M."/>
            <person name="Faulkner G."/>
            <person name="Fletcher C.F."/>
            <person name="Fukushima T."/>
            <person name="Furuno M."/>
            <person name="Futaki S."/>
            <person name="Gariboldi M."/>
            <person name="Georgii-Hemming P."/>
            <person name="Gingeras T.R."/>
            <person name="Gojobori T."/>
            <person name="Green R.E."/>
            <person name="Gustincich S."/>
            <person name="Harbers M."/>
            <person name="Hayashi Y."/>
            <person name="Hensch T.K."/>
            <person name="Hirokawa N."/>
            <person name="Hill D."/>
            <person name="Huminiecki L."/>
            <person name="Iacono M."/>
            <person name="Ikeo K."/>
            <person name="Iwama A."/>
            <person name="Ishikawa T."/>
            <person name="Jakt M."/>
            <person name="Kanapin A."/>
            <person name="Katoh M."/>
            <person name="Kawasawa Y."/>
            <person name="Kelso J."/>
            <person name="Kitamura H."/>
            <person name="Kitano H."/>
            <person name="Kollias G."/>
            <person name="Krishnan S.P."/>
            <person name="Kruger A."/>
            <person name="Kummerfeld S.K."/>
            <person name="Kurochkin I.V."/>
            <person name="Lareau L.F."/>
            <person name="Lazarevic D."/>
            <person name="Lipovich L."/>
            <person name="Liu J."/>
            <person name="Liuni S."/>
            <person name="McWilliam S."/>
            <person name="Madan Babu M."/>
            <person name="Madera M."/>
            <person name="Marchionni L."/>
            <person name="Matsuda H."/>
            <person name="Matsuzawa S."/>
            <person name="Miki H."/>
            <person name="Mignone F."/>
            <person name="Miyake S."/>
            <person name="Morris K."/>
            <person name="Mottagui-Tabar S."/>
            <person name="Mulder N."/>
            <person name="Nakano N."/>
            <person name="Nakauchi H."/>
            <person name="Ng P."/>
            <person name="Nilsson R."/>
            <person name="Nishiguchi S."/>
            <person name="Nishikawa S."/>
            <person name="Nori F."/>
            <person name="Ohara O."/>
            <person name="Okazaki Y."/>
            <person name="Orlando V."/>
            <person name="Pang K.C."/>
            <person name="Pavan W.J."/>
            <person name="Pavesi G."/>
            <person name="Pesole G."/>
            <person name="Petrovsky N."/>
            <person name="Piazza S."/>
            <person name="Reed J."/>
            <person name="Reid J.F."/>
            <person name="Ring B.Z."/>
            <person name="Ringwald M."/>
            <person name="Rost B."/>
            <person name="Ruan Y."/>
            <person name="Salzberg S.L."/>
            <person name="Sandelin A."/>
            <person name="Schneider C."/>
            <person name="Schoenbach C."/>
            <person name="Sekiguchi K."/>
            <person name="Semple C.A."/>
            <person name="Seno S."/>
            <person name="Sessa L."/>
            <person name="Sheng Y."/>
            <person name="Shibata Y."/>
            <person name="Shimada H."/>
            <person name="Shimada K."/>
            <person name="Silva D."/>
            <person name="Sinclair B."/>
            <person name="Sperling S."/>
            <person name="Stupka E."/>
            <person name="Sugiura K."/>
            <person name="Sultana R."/>
            <person name="Takenaka Y."/>
            <person name="Taki K."/>
            <person name="Tammoja K."/>
            <person name="Tan S.L."/>
            <person name="Tang S."/>
            <person name="Taylor M.S."/>
            <person name="Tegner J."/>
            <person name="Teichmann S.A."/>
            <person name="Ueda H.R."/>
            <person name="van Nimwegen E."/>
            <person name="Verardo R."/>
            <person name="Wei C.L."/>
            <person name="Yagi K."/>
            <person name="Yamanishi H."/>
            <person name="Zabarovsky E."/>
            <person name="Zhu S."/>
            <person name="Zimmer A."/>
            <person name="Hide W."/>
            <person name="Bult C."/>
            <person name="Grimmond S.M."/>
            <person name="Teasdale R.D."/>
            <person name="Liu E.T."/>
            <person name="Brusic V."/>
            <person name="Quackenbush J."/>
            <person name="Wahlestedt C."/>
            <person name="Mattick J.S."/>
            <person name="Hume D.A."/>
            <person name="Kai C."/>
            <person name="Sasaki D."/>
            <person name="Tomaru Y."/>
            <person name="Fukuda S."/>
            <person name="Kanamori-Katayama M."/>
            <person name="Suzuki M."/>
            <person name="Aoki J."/>
            <person name="Arakawa T."/>
            <person name="Iida J."/>
            <person name="Imamura K."/>
            <person name="Itoh M."/>
            <person name="Kato T."/>
            <person name="Kawaji H."/>
            <person name="Kawagashira N."/>
            <person name="Kawashima T."/>
            <person name="Kojima M."/>
            <person name="Kondo S."/>
            <person name="Konno H."/>
            <person name="Nakano K."/>
            <person name="Ninomiya N."/>
            <person name="Nishio T."/>
            <person name="Okada M."/>
            <person name="Plessy C."/>
            <person name="Shibata K."/>
            <person name="Shiraki T."/>
            <person name="Suzuki S."/>
            <person name="Tagami M."/>
            <person name="Waki K."/>
            <person name="Watahiki A."/>
            <person name="Okamura-Oho Y."/>
            <person name="Suzuki H."/>
            <person name="Kawai J."/>
            <person name="Hayashizaki Y."/>
        </authorList>
    </citation>
    <scope>NUCLEOTIDE SEQUENCE [LARGE SCALE MRNA] OF 3-456</scope>
    <source>
        <strain>NOD</strain>
        <tissue>Thymus</tissue>
    </source>
</reference>
<reference key="4">
    <citation type="journal article" date="2004" name="Genome Res.">
        <title>The status, quality, and expansion of the NIH full-length cDNA project: the Mammalian Gene Collection (MGC).</title>
        <authorList>
            <consortium name="The MGC Project Team"/>
        </authorList>
    </citation>
    <scope>NUCLEOTIDE SEQUENCE [LARGE SCALE MRNA] OF 7-456</scope>
    <source>
        <strain>NOD</strain>
        <tissue>Thymus</tissue>
    </source>
</reference>
<reference key="5">
    <citation type="journal article" date="2007" name="Chem. Biol.">
        <title>Chemical knockout of pantothenate kinase reveals the metabolic and genetic program responsible for hepatic coenzyme A homeostasis.</title>
        <authorList>
            <person name="Zhang Y.M."/>
            <person name="Chohnan S."/>
            <person name="Virga K.G."/>
            <person name="Stevens R.D."/>
            <person name="Ilkayeva O.R."/>
            <person name="Wenner B.R."/>
            <person name="Bain J.R."/>
            <person name="Newgard C.B."/>
            <person name="Lee R.E."/>
            <person name="Rock C.O."/>
            <person name="Jackowski S."/>
        </authorList>
    </citation>
    <scope>FUNCTION</scope>
    <scope>CATALYTIC ACTIVITY</scope>
    <scope>ACTIVITY REGULATION</scope>
</reference>
<reference key="6">
    <citation type="journal article" date="2007" name="FEBS Lett.">
        <title>Localization and regulation of mouse pantothenate kinase 2.</title>
        <authorList>
            <person name="Leonardi R."/>
            <person name="Zhang Y.M."/>
            <person name="Lykidis A."/>
            <person name="Rock C.O."/>
            <person name="Jackowski S."/>
        </authorList>
    </citation>
    <scope>FUNCTION</scope>
    <scope>CATALYTIC ACTIVITY</scope>
    <scope>ACTIVITY REGULATION</scope>
    <scope>SUBCELLULAR LOCATION</scope>
</reference>
<reference key="7">
    <citation type="journal article" date="2010" name="Cell">
        <title>A tissue-specific atlas of mouse protein phosphorylation and expression.</title>
        <authorList>
            <person name="Huttlin E.L."/>
            <person name="Jedrychowski M.P."/>
            <person name="Elias J.E."/>
            <person name="Goswami T."/>
            <person name="Rad R."/>
            <person name="Beausoleil S.A."/>
            <person name="Villen J."/>
            <person name="Haas W."/>
            <person name="Sowa M.E."/>
            <person name="Gygi S.P."/>
        </authorList>
    </citation>
    <scope>IDENTIFICATION BY MASS SPECTROMETRY [LARGE SCALE ANALYSIS]</scope>
</reference>
<reference key="8">
    <citation type="journal article" date="2012" name="PLoS ONE">
        <title>Germline deletion of pantothenate kinases 1 and 2 reveals the key roles for CoA in postnatal metabolism.</title>
        <authorList>
            <person name="Garcia M."/>
            <person name="Leonardi R."/>
            <person name="Zhang Y.M."/>
            <person name="Rehg J.E."/>
            <person name="Jackowski S."/>
        </authorList>
    </citation>
    <scope>FUNCTION</scope>
    <scope>CATALYTIC ACTIVITY</scope>
    <scope>DISRUPTION PHENOTYPE</scope>
</reference>
<reference key="9">
    <citation type="journal article" date="2012" name="PLoS ONE">
        <title>Compartmentalization of mammalian pantothenate kinases.</title>
        <authorList>
            <person name="Alfonso-Pecchio A."/>
            <person name="Garcia M."/>
            <person name="Leonardi R."/>
            <person name="Jackowski S."/>
        </authorList>
    </citation>
    <scope>SUBCELLULAR LOCATION</scope>
</reference>
<sequence length="456" mass="50212">MGGWLGRQRRLLRMGAGRFGAPMERQGRAAATSAAVGESADSEARRRDPLRRRASSAAPSGSGEAESVRRERPGSLGGSTSAGRPRAEGLRKRRPLFPWFGLDIGGTLVKLVYFEPKDITAEEEKEEVESLKSIRKYLTSNVAYGSTGIRDVHLELKDLTLCGRKGNLHFIRFPTHDMPAFIQMGRDKNFSSLHTVFCATGGGSYKFEQDFLTIGDLQLRKLDELDCLIKGILYIDSVGFNGRSQCYYFENPADSEKCQKLPFDLKNPYPLLLVNIGSGVSILAVYSKDNYKRVTGTSLGGGTFFGLCCLLTGCSTFEEALEMASRGDSTKVDKLVRDIYGGDYERFGLPGWAVASSFGNMMSKEKREAASKEDLARATLITITNNIGSIARMCALNENINQVVFVGNFLRVNTIAMRLLAYALDYWSKGQLKALFSEHEGYFGAVGALLELLKIP</sequence>